<evidence type="ECO:0000250" key="1">
    <source>
        <dbReference type="UniProtKB" id="P0DP23"/>
    </source>
</evidence>
<evidence type="ECO:0000255" key="2">
    <source>
        <dbReference type="PROSITE-ProRule" id="PRU00448"/>
    </source>
</evidence>
<evidence type="ECO:0000305" key="3"/>
<organism>
    <name type="scientific">Electrophorus electricus</name>
    <name type="common">Electric eel</name>
    <name type="synonym">Gymnotus electricus</name>
    <dbReference type="NCBI Taxonomy" id="8005"/>
    <lineage>
        <taxon>Eukaryota</taxon>
        <taxon>Metazoa</taxon>
        <taxon>Chordata</taxon>
        <taxon>Craniata</taxon>
        <taxon>Vertebrata</taxon>
        <taxon>Euteleostomi</taxon>
        <taxon>Actinopterygii</taxon>
        <taxon>Neopterygii</taxon>
        <taxon>Teleostei</taxon>
        <taxon>Ostariophysi</taxon>
        <taxon>Gymnotiformes</taxon>
        <taxon>Gymnotoidei</taxon>
        <taxon>Gymnotidae</taxon>
        <taxon>Electrophorus</taxon>
    </lineage>
</organism>
<keyword id="KW-0007">Acetylation</keyword>
<keyword id="KW-0106">Calcium</keyword>
<keyword id="KW-0479">Metal-binding</keyword>
<keyword id="KW-0488">Methylation</keyword>
<keyword id="KW-1185">Reference proteome</keyword>
<keyword id="KW-0677">Repeat</keyword>
<feature type="initiator methionine" description="Removed" evidence="1">
    <location>
        <position position="1"/>
    </location>
</feature>
<feature type="chain" id="PRO_0000198233" description="Calmodulin">
    <location>
        <begin position="2"/>
        <end position="149"/>
    </location>
</feature>
<feature type="domain" description="EF-hand 1" evidence="2">
    <location>
        <begin position="8"/>
        <end position="43"/>
    </location>
</feature>
<feature type="domain" description="EF-hand 2" evidence="2">
    <location>
        <begin position="44"/>
        <end position="79"/>
    </location>
</feature>
<feature type="domain" description="EF-hand 3" evidence="2">
    <location>
        <begin position="81"/>
        <end position="116"/>
    </location>
</feature>
<feature type="domain" description="EF-hand 4" evidence="2">
    <location>
        <begin position="117"/>
        <end position="149"/>
    </location>
</feature>
<feature type="binding site" evidence="2">
    <location>
        <position position="21"/>
    </location>
    <ligand>
        <name>Ca(2+)</name>
        <dbReference type="ChEBI" id="CHEBI:29108"/>
        <label>1</label>
    </ligand>
</feature>
<feature type="binding site" evidence="2">
    <location>
        <position position="23"/>
    </location>
    <ligand>
        <name>Ca(2+)</name>
        <dbReference type="ChEBI" id="CHEBI:29108"/>
        <label>1</label>
    </ligand>
</feature>
<feature type="binding site" evidence="2">
    <location>
        <position position="25"/>
    </location>
    <ligand>
        <name>Ca(2+)</name>
        <dbReference type="ChEBI" id="CHEBI:29108"/>
        <label>1</label>
    </ligand>
</feature>
<feature type="binding site" evidence="2">
    <location>
        <position position="27"/>
    </location>
    <ligand>
        <name>Ca(2+)</name>
        <dbReference type="ChEBI" id="CHEBI:29108"/>
        <label>1</label>
    </ligand>
</feature>
<feature type="binding site" evidence="2">
    <location>
        <position position="32"/>
    </location>
    <ligand>
        <name>Ca(2+)</name>
        <dbReference type="ChEBI" id="CHEBI:29108"/>
        <label>1</label>
    </ligand>
</feature>
<feature type="binding site" evidence="2">
    <location>
        <position position="57"/>
    </location>
    <ligand>
        <name>Ca(2+)</name>
        <dbReference type="ChEBI" id="CHEBI:29108"/>
        <label>2</label>
    </ligand>
</feature>
<feature type="binding site" evidence="2">
    <location>
        <position position="59"/>
    </location>
    <ligand>
        <name>Ca(2+)</name>
        <dbReference type="ChEBI" id="CHEBI:29108"/>
        <label>2</label>
    </ligand>
</feature>
<feature type="binding site" evidence="2">
    <location>
        <position position="61"/>
    </location>
    <ligand>
        <name>Ca(2+)</name>
        <dbReference type="ChEBI" id="CHEBI:29108"/>
        <label>2</label>
    </ligand>
</feature>
<feature type="binding site" evidence="2">
    <location>
        <position position="63"/>
    </location>
    <ligand>
        <name>Ca(2+)</name>
        <dbReference type="ChEBI" id="CHEBI:29108"/>
        <label>2</label>
    </ligand>
</feature>
<feature type="binding site" evidence="2">
    <location>
        <position position="68"/>
    </location>
    <ligand>
        <name>Ca(2+)</name>
        <dbReference type="ChEBI" id="CHEBI:29108"/>
        <label>2</label>
    </ligand>
</feature>
<feature type="binding site" evidence="2">
    <location>
        <position position="94"/>
    </location>
    <ligand>
        <name>Ca(2+)</name>
        <dbReference type="ChEBI" id="CHEBI:29108"/>
        <label>3</label>
    </ligand>
</feature>
<feature type="binding site" evidence="2">
    <location>
        <position position="96"/>
    </location>
    <ligand>
        <name>Ca(2+)</name>
        <dbReference type="ChEBI" id="CHEBI:29108"/>
        <label>3</label>
    </ligand>
</feature>
<feature type="binding site" evidence="2">
    <location>
        <position position="98"/>
    </location>
    <ligand>
        <name>Ca(2+)</name>
        <dbReference type="ChEBI" id="CHEBI:29108"/>
        <label>3</label>
    </ligand>
</feature>
<feature type="binding site" evidence="2">
    <location>
        <position position="100"/>
    </location>
    <ligand>
        <name>Ca(2+)</name>
        <dbReference type="ChEBI" id="CHEBI:29108"/>
        <label>3</label>
    </ligand>
</feature>
<feature type="binding site" evidence="2">
    <location>
        <position position="105"/>
    </location>
    <ligand>
        <name>Ca(2+)</name>
        <dbReference type="ChEBI" id="CHEBI:29108"/>
        <label>3</label>
    </ligand>
</feature>
<feature type="binding site" evidence="2">
    <location>
        <position position="130"/>
    </location>
    <ligand>
        <name>Ca(2+)</name>
        <dbReference type="ChEBI" id="CHEBI:29108"/>
        <label>4</label>
    </ligand>
</feature>
<feature type="binding site" evidence="2">
    <location>
        <position position="132"/>
    </location>
    <ligand>
        <name>Ca(2+)</name>
        <dbReference type="ChEBI" id="CHEBI:29108"/>
        <label>4</label>
    </ligand>
</feature>
<feature type="binding site" evidence="2">
    <location>
        <position position="134"/>
    </location>
    <ligand>
        <name>Ca(2+)</name>
        <dbReference type="ChEBI" id="CHEBI:29108"/>
        <label>4</label>
    </ligand>
</feature>
<feature type="binding site" evidence="2">
    <location>
        <position position="136"/>
    </location>
    <ligand>
        <name>Ca(2+)</name>
        <dbReference type="ChEBI" id="CHEBI:29108"/>
        <label>4</label>
    </ligand>
</feature>
<feature type="binding site" evidence="2">
    <location>
        <position position="141"/>
    </location>
    <ligand>
        <name>Ca(2+)</name>
        <dbReference type="ChEBI" id="CHEBI:29108"/>
        <label>4</label>
    </ligand>
</feature>
<feature type="modified residue" description="N-acetylalanine" evidence="1">
    <location>
        <position position="2"/>
    </location>
</feature>
<feature type="modified residue" description="N6,N6,N6-trimethyllysine" evidence="1">
    <location>
        <position position="116"/>
    </location>
</feature>
<feature type="sequence conflict" description="In Ref. 3; AAA62797." evidence="3" ref="3">
    <original>F</original>
    <variation>V</variation>
    <location>
        <position position="93"/>
    </location>
</feature>
<feature type="sequence conflict" description="In Ref. 3; AAA49237." evidence="3" ref="3">
    <original>D</original>
    <variation>E</variation>
    <location>
        <position position="96"/>
    </location>
</feature>
<feature type="sequence conflict" description="In Ref. 3; AAA49237." evidence="3" ref="3">
    <original>R</original>
    <variation>G</variation>
    <location>
        <position position="107"/>
    </location>
</feature>
<feature type="sequence conflict" description="In Ref. 3; AAA49237." evidence="3" ref="3">
    <original>M</original>
    <variation>I</variation>
    <location>
        <position position="110"/>
    </location>
</feature>
<feature type="sequence conflict" description="In Ref. 3; AAA62797." evidence="3" ref="3">
    <original>G</original>
    <variation>A</variation>
    <location>
        <position position="114"/>
    </location>
</feature>
<protein>
    <recommendedName>
        <fullName>Calmodulin</fullName>
        <shortName>CaM</shortName>
    </recommendedName>
</protein>
<accession>P02594</accession>
<accession>Q90496</accession>
<name>CALM_ELEEL</name>
<dbReference type="EMBL" id="J00931">
    <property type="status" value="NOT_ANNOTATED_CDS"/>
    <property type="molecule type" value="mRNA"/>
</dbReference>
<dbReference type="EMBL" id="M36168">
    <property type="protein sequence ID" value="AAA49236.1"/>
    <property type="molecule type" value="mRNA"/>
</dbReference>
<dbReference type="EMBL" id="M17495">
    <property type="protein sequence ID" value="AAA49237.1"/>
    <property type="molecule type" value="mRNA"/>
</dbReference>
<dbReference type="EMBL" id="M25058">
    <property type="protein sequence ID" value="AAA62797.1"/>
    <property type="molecule type" value="mRNA"/>
</dbReference>
<dbReference type="PIR" id="A03022">
    <property type="entry name" value="MCEE"/>
</dbReference>
<dbReference type="PIR" id="I50533">
    <property type="entry name" value="I50533"/>
</dbReference>
<dbReference type="PIR" id="I50535">
    <property type="entry name" value="I50535"/>
</dbReference>
<dbReference type="BMRB" id="P02594"/>
<dbReference type="SMR" id="P02594"/>
<dbReference type="STRING" id="8005.ENSEEEP00000028240"/>
<dbReference type="Ensembl" id="ENSEEET00000043913.2">
    <property type="protein sequence ID" value="ENSEEEP00000043415.1"/>
    <property type="gene ID" value="ENSEEEG00000020432.2"/>
</dbReference>
<dbReference type="Ensembl" id="ENSEEET00000043915.2">
    <property type="protein sequence ID" value="ENSEEEP00000043417.1"/>
    <property type="gene ID" value="ENSEEEG00000020432.2"/>
</dbReference>
<dbReference type="GeneTree" id="ENSGT00950000182980"/>
<dbReference type="OrthoDB" id="8758523at2759"/>
<dbReference type="Proteomes" id="UP000314983">
    <property type="component" value="Chromosome 15"/>
</dbReference>
<dbReference type="GO" id="GO:0016460">
    <property type="term" value="C:myosin II complex"/>
    <property type="evidence" value="ECO:0007669"/>
    <property type="project" value="TreeGrafter"/>
</dbReference>
<dbReference type="GO" id="GO:0005509">
    <property type="term" value="F:calcium ion binding"/>
    <property type="evidence" value="ECO:0007669"/>
    <property type="project" value="InterPro"/>
</dbReference>
<dbReference type="CDD" id="cd00051">
    <property type="entry name" value="EFh"/>
    <property type="match status" value="2"/>
</dbReference>
<dbReference type="FunFam" id="1.10.238.10:FF:000527">
    <property type="entry name" value="Calmodulin-3"/>
    <property type="match status" value="1"/>
</dbReference>
<dbReference type="Gene3D" id="1.10.238.10">
    <property type="entry name" value="EF-hand"/>
    <property type="match status" value="3"/>
</dbReference>
<dbReference type="InterPro" id="IPR050230">
    <property type="entry name" value="CALM/Myosin/TropC-like"/>
</dbReference>
<dbReference type="InterPro" id="IPR011992">
    <property type="entry name" value="EF-hand-dom_pair"/>
</dbReference>
<dbReference type="InterPro" id="IPR018247">
    <property type="entry name" value="EF_Hand_1_Ca_BS"/>
</dbReference>
<dbReference type="InterPro" id="IPR002048">
    <property type="entry name" value="EF_hand_dom"/>
</dbReference>
<dbReference type="PANTHER" id="PTHR23048:SF0">
    <property type="entry name" value="CALMODULIN LIKE 3"/>
    <property type="match status" value="1"/>
</dbReference>
<dbReference type="PANTHER" id="PTHR23048">
    <property type="entry name" value="MYOSIN LIGHT CHAIN 1, 3"/>
    <property type="match status" value="1"/>
</dbReference>
<dbReference type="Pfam" id="PF13499">
    <property type="entry name" value="EF-hand_7"/>
    <property type="match status" value="2"/>
</dbReference>
<dbReference type="PRINTS" id="PR00450">
    <property type="entry name" value="RECOVERIN"/>
</dbReference>
<dbReference type="SMART" id="SM00054">
    <property type="entry name" value="EFh"/>
    <property type="match status" value="4"/>
</dbReference>
<dbReference type="SUPFAM" id="SSF47473">
    <property type="entry name" value="EF-hand"/>
    <property type="match status" value="1"/>
</dbReference>
<dbReference type="PROSITE" id="PS00018">
    <property type="entry name" value="EF_HAND_1"/>
    <property type="match status" value="4"/>
</dbReference>
<dbReference type="PROSITE" id="PS50222">
    <property type="entry name" value="EF_HAND_2"/>
    <property type="match status" value="4"/>
</dbReference>
<comment type="function">
    <text evidence="1">Calmodulin acts as part of a calcium signal transduction pathway by mediating the control of a large number of enzymes, ion channels, aquaporins and other proteins through calcium-binding. Calcium-binding is required for the activation of calmodulin. Among the enzymes to be stimulated by the calmodulin-calcium complex are a number of protein kinases, such as myosin light-chain kinases and calmodulin-dependent protein kinase type II (CaMK2), and phosphatases.</text>
</comment>
<comment type="miscellaneous">
    <text>This protein has four functional calcium-binding sites.</text>
</comment>
<comment type="similarity">
    <text evidence="3">Belongs to the calmodulin family.</text>
</comment>
<gene>
    <name type="primary">calm</name>
</gene>
<reference key="1">
    <citation type="journal article" date="1983" name="J. Biol. Chem.">
        <title>Identification of multiple species of calmodulin messenger RNA using a full length complementary DNA.</title>
        <authorList>
            <person name="Lagace L."/>
            <person name="Chandra T."/>
            <person name="Woo S.L.C."/>
            <person name="Means A.R."/>
        </authorList>
    </citation>
    <scope>NUCLEOTIDE SEQUENCE [MRNA]</scope>
    <source>
        <tissue>Electroplax</tissue>
    </source>
</reference>
<reference key="2">
    <citation type="journal article" date="1984" name="Bull. Chem. Soc. Jpn.">
        <title>cDNA sequences and molecular evolution of calmodulin genes of chicken and eel.</title>
        <authorList>
            <person name="Iida Y."/>
        </authorList>
    </citation>
    <scope>NUCLEOTIDE SEQUENCE [MRNA]</scope>
    <source>
        <tissue>Electroplax</tissue>
    </source>
</reference>
<reference key="3">
    <citation type="journal article" date="1981" name="Proc. Natl. Acad. Sci. U.S.A.">
        <title>A cloned calmodulin structural gene probe is complementary to DNA sequences from diverse species.</title>
        <authorList>
            <person name="Munjaal R.P."/>
            <person name="Chandra T."/>
            <person name="Woo S.L.C."/>
            <person name="Dedman J.R."/>
            <person name="Means A.R."/>
        </authorList>
    </citation>
    <scope>NUCLEOTIDE SEQUENCE [MRNA] OF 93-114</scope>
    <source>
        <tissue>Electroplax</tissue>
    </source>
</reference>
<proteinExistence type="evidence at transcript level"/>
<sequence>MADQLTEEQIAEFKEAFSLFDKDGDGTITTKELGTVMRSLGQNPTEAELQDMINEVDADGNGTIDFPEFLTMMAKKMKDTDSEEEIREAFRVFDKDGNGYISAAELRHVMTNLGEKLTDEEVDEMIREADIDGDGQVNYEEFVQMMTAK</sequence>